<gene>
    <name evidence="8" type="primary">dmd-5</name>
    <name evidence="8" type="ORF">F10C1.5</name>
</gene>
<accession>Q19291</accession>
<sequence>MPVSPSSVSVLPPTSLEQILRIRAERNQRTPKCARCRNHGTTSALKGHKRYCQWKDCMCAKCTLIAERQRVMAAQVALRRQQSQEERDARDLEVLLGSAGNANDLLDILRLDAGEHHGKNHASPTTNNNNNTEEKYEDSQGQRSSPSSPTGSETVVSTSSPPELSSESTPNTSGSVIPTSPVFKPNGYSSMPMFNPVYGRPFMRFPMFSVMPHFFGTPSMSDFASAASLAAPPAFFSAQPTIATSSPSTIFPQTAPLDYSHRLMKNEEAEEEYRENDKTF</sequence>
<protein>
    <recommendedName>
        <fullName evidence="5">Doublesex- and mab-3-related transcription factor dmd-5</fullName>
    </recommendedName>
</protein>
<feature type="chain" id="PRO_0000455666" description="Doublesex- and mab-3-related transcription factor dmd-5">
    <location>
        <begin position="1"/>
        <end position="280"/>
    </location>
</feature>
<feature type="DNA-binding region" description="DM" evidence="2">
    <location>
        <begin position="33"/>
        <end position="80"/>
    </location>
</feature>
<feature type="region of interest" description="Disordered" evidence="3">
    <location>
        <begin position="116"/>
        <end position="182"/>
    </location>
</feature>
<feature type="compositionally biased region" description="Polar residues" evidence="3">
    <location>
        <begin position="141"/>
        <end position="156"/>
    </location>
</feature>
<feature type="compositionally biased region" description="Low complexity" evidence="3">
    <location>
        <begin position="157"/>
        <end position="173"/>
    </location>
</feature>
<feature type="mutagenesis site" description="In gk408945; alterations in AVG interneuron synaptic wiring. Suppresses the ectopic synapses formed between PHB and AVG neurons when AVG is masculinized by cell-specific expression of fem-3 in hermaphrodites. Defects in male mating behavior; reduced efficiency in locating vulva of partner." evidence="4">
    <original>W</original>
    <variation>R</variation>
    <location>
        <position position="54"/>
    </location>
</feature>
<dbReference type="EMBL" id="BX284602">
    <property type="protein sequence ID" value="CCD65032.1"/>
    <property type="molecule type" value="Genomic_DNA"/>
</dbReference>
<dbReference type="PIR" id="T16020">
    <property type="entry name" value="T16020"/>
</dbReference>
<dbReference type="RefSeq" id="NP_495138.2">
    <property type="nucleotide sequence ID" value="NM_062737.6"/>
</dbReference>
<dbReference type="SMR" id="Q19291"/>
<dbReference type="FunCoup" id="Q19291">
    <property type="interactions" value="130"/>
</dbReference>
<dbReference type="IntAct" id="Q19291">
    <property type="interactions" value="5"/>
</dbReference>
<dbReference type="STRING" id="6239.F10C1.5.1"/>
<dbReference type="PaxDb" id="6239-F10C1.5"/>
<dbReference type="EnsemblMetazoa" id="F10C1.5.1">
    <property type="protein sequence ID" value="F10C1.5.1"/>
    <property type="gene ID" value="WBGene00017326"/>
</dbReference>
<dbReference type="GeneID" id="184287"/>
<dbReference type="KEGG" id="cel:CELE_F10C1.5"/>
<dbReference type="UCSC" id="F10C1.5">
    <property type="organism name" value="c. elegans"/>
</dbReference>
<dbReference type="AGR" id="WB:WBGene00017326"/>
<dbReference type="CTD" id="184287"/>
<dbReference type="WormBase" id="F10C1.5">
    <property type="protein sequence ID" value="CE29753"/>
    <property type="gene ID" value="WBGene00017326"/>
    <property type="gene designation" value="dmd-5"/>
</dbReference>
<dbReference type="eggNOG" id="KOG3815">
    <property type="taxonomic scope" value="Eukaryota"/>
</dbReference>
<dbReference type="GeneTree" id="ENSGT00940000168442"/>
<dbReference type="HOGENOM" id="CLU_967212_0_0_1"/>
<dbReference type="InParanoid" id="Q19291"/>
<dbReference type="OMA" id="QTAPLDC"/>
<dbReference type="OrthoDB" id="6162476at2759"/>
<dbReference type="PRO" id="PR:Q19291"/>
<dbReference type="Proteomes" id="UP000001940">
    <property type="component" value="Chromosome II"/>
</dbReference>
<dbReference type="Bgee" id="WBGene00017326">
    <property type="expression patterns" value="Expressed in pharyngeal muscle cell (C elegans) and 3 other cell types or tissues"/>
</dbReference>
<dbReference type="GO" id="GO:0005634">
    <property type="term" value="C:nucleus"/>
    <property type="evidence" value="ECO:0000318"/>
    <property type="project" value="GO_Central"/>
</dbReference>
<dbReference type="GO" id="GO:0000981">
    <property type="term" value="F:DNA-binding transcription factor activity, RNA polymerase II-specific"/>
    <property type="evidence" value="ECO:0000318"/>
    <property type="project" value="GO_Central"/>
</dbReference>
<dbReference type="GO" id="GO:0046872">
    <property type="term" value="F:metal ion binding"/>
    <property type="evidence" value="ECO:0007669"/>
    <property type="project" value="UniProtKB-KW"/>
</dbReference>
<dbReference type="GO" id="GO:0000978">
    <property type="term" value="F:RNA polymerase II cis-regulatory region sequence-specific DNA binding"/>
    <property type="evidence" value="ECO:0000318"/>
    <property type="project" value="GO_Central"/>
</dbReference>
<dbReference type="GO" id="GO:0090598">
    <property type="term" value="P:male anatomical structure morphogenesis"/>
    <property type="evidence" value="ECO:0000315"/>
    <property type="project" value="UniProtKB"/>
</dbReference>
<dbReference type="GO" id="GO:1905807">
    <property type="term" value="P:negative regulation of synapse pruning"/>
    <property type="evidence" value="ECO:0000315"/>
    <property type="project" value="UniProtKB"/>
</dbReference>
<dbReference type="GO" id="GO:0006357">
    <property type="term" value="P:regulation of transcription by RNA polymerase II"/>
    <property type="evidence" value="ECO:0000318"/>
    <property type="project" value="GO_Central"/>
</dbReference>
<dbReference type="GO" id="GO:0007548">
    <property type="term" value="P:sex differentiation"/>
    <property type="evidence" value="ECO:0000318"/>
    <property type="project" value="GO_Central"/>
</dbReference>
<dbReference type="FunFam" id="4.10.1040.10:FF:000001">
    <property type="entry name" value="doublesex- and mab-3-related transcription factor 1"/>
    <property type="match status" value="1"/>
</dbReference>
<dbReference type="Gene3D" id="4.10.1040.10">
    <property type="entry name" value="DM DNA-binding domain"/>
    <property type="match status" value="1"/>
</dbReference>
<dbReference type="InterPro" id="IPR001275">
    <property type="entry name" value="DM_DNA-bd"/>
</dbReference>
<dbReference type="InterPro" id="IPR036407">
    <property type="entry name" value="DM_DNA-bd_sf"/>
</dbReference>
<dbReference type="InterPro" id="IPR026607">
    <property type="entry name" value="DMRT"/>
</dbReference>
<dbReference type="PANTHER" id="PTHR12322">
    <property type="entry name" value="DOUBLESEX AND MAB-3 RELATED TRANSCRIPTION FACTOR DMRT"/>
    <property type="match status" value="1"/>
</dbReference>
<dbReference type="PANTHER" id="PTHR12322:SF116">
    <property type="entry name" value="DOUBLESEX-MAB RELATED 99B"/>
    <property type="match status" value="1"/>
</dbReference>
<dbReference type="Pfam" id="PF00751">
    <property type="entry name" value="DM"/>
    <property type="match status" value="1"/>
</dbReference>
<dbReference type="SMART" id="SM00301">
    <property type="entry name" value="DM"/>
    <property type="match status" value="1"/>
</dbReference>
<dbReference type="SUPFAM" id="SSF82927">
    <property type="entry name" value="Cysteine-rich DNA binding domain, (DM domain)"/>
    <property type="match status" value="1"/>
</dbReference>
<dbReference type="PROSITE" id="PS40000">
    <property type="entry name" value="DM_1"/>
    <property type="match status" value="1"/>
</dbReference>
<dbReference type="PROSITE" id="PS50809">
    <property type="entry name" value="DM_2"/>
    <property type="match status" value="1"/>
</dbReference>
<proteinExistence type="evidence at protein level"/>
<organism evidence="7">
    <name type="scientific">Caenorhabditis elegans</name>
    <dbReference type="NCBI Taxonomy" id="6239"/>
    <lineage>
        <taxon>Eukaryota</taxon>
        <taxon>Metazoa</taxon>
        <taxon>Ecdysozoa</taxon>
        <taxon>Nematoda</taxon>
        <taxon>Chromadorea</taxon>
        <taxon>Rhabditida</taxon>
        <taxon>Rhabditina</taxon>
        <taxon>Rhabditomorpha</taxon>
        <taxon>Rhabditoidea</taxon>
        <taxon>Rhabditidae</taxon>
        <taxon>Peloderinae</taxon>
        <taxon>Caenorhabditis</taxon>
    </lineage>
</organism>
<name>DMD5_CAEEL</name>
<comment type="function">
    <text evidence="1 4">Transcription factor (By similarity). Required for sex-specific synaptic pruning, probably acting downstream of sex-determining transformer protein tra-1 (PubMed:27144354).</text>
</comment>
<comment type="subcellular location">
    <subcellularLocation>
        <location evidence="2">Nucleus</location>
    </subcellularLocation>
</comment>
<comment type="tissue specificity">
    <text evidence="4">Dimorphically expressed in the dimorphically connected interneuron AVG; expression is observed in the AVG in males, but not in hermaphrodites.</text>
</comment>
<comment type="similarity">
    <text evidence="6">Belongs to the DMRT family.</text>
</comment>
<evidence type="ECO:0000250" key="1">
    <source>
        <dbReference type="UniProtKB" id="Q9QZ59"/>
    </source>
</evidence>
<evidence type="ECO:0000255" key="2">
    <source>
        <dbReference type="PROSITE-ProRule" id="PRU00070"/>
    </source>
</evidence>
<evidence type="ECO:0000256" key="3">
    <source>
        <dbReference type="SAM" id="MobiDB-lite"/>
    </source>
</evidence>
<evidence type="ECO:0000269" key="4">
    <source>
    </source>
</evidence>
<evidence type="ECO:0000303" key="5">
    <source>
    </source>
</evidence>
<evidence type="ECO:0000305" key="6"/>
<evidence type="ECO:0000312" key="7">
    <source>
        <dbReference type="Proteomes" id="UP000001940"/>
    </source>
</evidence>
<evidence type="ECO:0000312" key="8">
    <source>
        <dbReference type="WormBase" id="F10C1.5"/>
    </source>
</evidence>
<reference evidence="7" key="1">
    <citation type="journal article" date="1998" name="Science">
        <title>Genome sequence of the nematode C. elegans: a platform for investigating biology.</title>
        <authorList>
            <consortium name="The C. elegans sequencing consortium"/>
        </authorList>
    </citation>
    <scope>NUCLEOTIDE SEQUENCE [LARGE SCALE GENOMIC DNA]</scope>
    <source>
        <strain evidence="7">Bristol N2</strain>
    </source>
</reference>
<reference evidence="6" key="2">
    <citation type="journal article" date="2016" name="Nature">
        <title>Sex-specific pruning of neuronal synapses in Caenorhabditis elegans.</title>
        <authorList>
            <person name="Oren-Suissa M."/>
            <person name="Bayer E.A."/>
            <person name="Hobert O."/>
        </authorList>
    </citation>
    <scope>FUNCTION</scope>
    <scope>TISSUE SPECIFICITY</scope>
    <scope>MUTAGENESIS OF TRP-54</scope>
</reference>
<keyword id="KW-0238">DNA-binding</keyword>
<keyword id="KW-0479">Metal-binding</keyword>
<keyword id="KW-0539">Nucleus</keyword>
<keyword id="KW-1185">Reference proteome</keyword>
<keyword id="KW-0804">Transcription</keyword>
<keyword id="KW-0805">Transcription regulation</keyword>
<keyword id="KW-0862">Zinc</keyword>